<sequence length="185" mass="20648">MDNLWTSLPLPGLSDDQRHWLFAPGSLTLRLKALGRFSLEVTQQRIDFPEPGEAHALGCTTDSPAWIREVALKIDDQVMVCARSLTPMRERRPAWPELAGYGGEPLGSMLYNTPDIHRGAFECQRPQADDPLSRLATSLGQPSGKLLARRSRFLRDGQPLLIAECFVEGFWALLQERSAPLKLAI</sequence>
<proteinExistence type="inferred from homology"/>
<protein>
    <recommendedName>
        <fullName evidence="1">Probable chorismate pyruvate-lyase 1</fullName>
        <shortName evidence="1">CL 1</shortName>
        <shortName evidence="1">CPL 1</shortName>
        <ecNumber evidence="1">4.1.3.40</ecNumber>
    </recommendedName>
</protein>
<gene>
    <name evidence="1" type="primary">ubiC1</name>
    <name type="ordered locus">PSEEN4753</name>
</gene>
<accession>Q1I4M5</accession>
<keyword id="KW-0963">Cytoplasm</keyword>
<keyword id="KW-0456">Lyase</keyword>
<keyword id="KW-0670">Pyruvate</keyword>
<keyword id="KW-0831">Ubiquinone biosynthesis</keyword>
<reference key="1">
    <citation type="journal article" date="2006" name="Nat. Biotechnol.">
        <title>Complete genome sequence of the entomopathogenic and metabolically versatile soil bacterium Pseudomonas entomophila.</title>
        <authorList>
            <person name="Vodovar N."/>
            <person name="Vallenet D."/>
            <person name="Cruveiller S."/>
            <person name="Rouy Z."/>
            <person name="Barbe V."/>
            <person name="Acosta C."/>
            <person name="Cattolico L."/>
            <person name="Jubin C."/>
            <person name="Lajus A."/>
            <person name="Segurens B."/>
            <person name="Vacherie B."/>
            <person name="Wincker P."/>
            <person name="Weissenbach J."/>
            <person name="Lemaitre B."/>
            <person name="Medigue C."/>
            <person name="Boccard F."/>
        </authorList>
    </citation>
    <scope>NUCLEOTIDE SEQUENCE [LARGE SCALE GENOMIC DNA]</scope>
    <source>
        <strain>L48</strain>
    </source>
</reference>
<organism>
    <name type="scientific">Pseudomonas entomophila (strain L48)</name>
    <dbReference type="NCBI Taxonomy" id="384676"/>
    <lineage>
        <taxon>Bacteria</taxon>
        <taxon>Pseudomonadati</taxon>
        <taxon>Pseudomonadota</taxon>
        <taxon>Gammaproteobacteria</taxon>
        <taxon>Pseudomonadales</taxon>
        <taxon>Pseudomonadaceae</taxon>
        <taxon>Pseudomonas</taxon>
    </lineage>
</organism>
<name>UBIC1_PSEE4</name>
<feature type="chain" id="PRO_0000292072" description="Probable chorismate pyruvate-lyase 1">
    <location>
        <begin position="1"/>
        <end position="185"/>
    </location>
</feature>
<feature type="binding site" evidence="1">
    <location>
        <position position="68"/>
    </location>
    <ligand>
        <name>substrate</name>
    </ligand>
</feature>
<feature type="binding site" evidence="1">
    <location>
        <position position="106"/>
    </location>
    <ligand>
        <name>substrate</name>
    </ligand>
</feature>
<feature type="binding site" evidence="1">
    <location>
        <position position="164"/>
    </location>
    <ligand>
        <name>substrate</name>
    </ligand>
</feature>
<evidence type="ECO:0000255" key="1">
    <source>
        <dbReference type="HAMAP-Rule" id="MF_01632"/>
    </source>
</evidence>
<dbReference type="EC" id="4.1.3.40" evidence="1"/>
<dbReference type="EMBL" id="CT573326">
    <property type="protein sequence ID" value="CAK17411.1"/>
    <property type="molecule type" value="Genomic_DNA"/>
</dbReference>
<dbReference type="RefSeq" id="WP_011535773.1">
    <property type="nucleotide sequence ID" value="NC_008027.1"/>
</dbReference>
<dbReference type="SMR" id="Q1I4M5"/>
<dbReference type="STRING" id="384676.PSEEN4753"/>
<dbReference type="GeneID" id="32807716"/>
<dbReference type="KEGG" id="pen:PSEEN4753"/>
<dbReference type="eggNOG" id="COG3161">
    <property type="taxonomic scope" value="Bacteria"/>
</dbReference>
<dbReference type="HOGENOM" id="CLU_096824_0_0_6"/>
<dbReference type="OrthoDB" id="9789493at2"/>
<dbReference type="UniPathway" id="UPA00232"/>
<dbReference type="Proteomes" id="UP000000658">
    <property type="component" value="Chromosome"/>
</dbReference>
<dbReference type="GO" id="GO:0005829">
    <property type="term" value="C:cytosol"/>
    <property type="evidence" value="ECO:0007669"/>
    <property type="project" value="TreeGrafter"/>
</dbReference>
<dbReference type="GO" id="GO:0008813">
    <property type="term" value="F:chorismate lyase activity"/>
    <property type="evidence" value="ECO:0007669"/>
    <property type="project" value="UniProtKB-UniRule"/>
</dbReference>
<dbReference type="GO" id="GO:0042866">
    <property type="term" value="P:pyruvate biosynthetic process"/>
    <property type="evidence" value="ECO:0007669"/>
    <property type="project" value="UniProtKB-UniRule"/>
</dbReference>
<dbReference type="GO" id="GO:0006744">
    <property type="term" value="P:ubiquinone biosynthetic process"/>
    <property type="evidence" value="ECO:0007669"/>
    <property type="project" value="UniProtKB-UniRule"/>
</dbReference>
<dbReference type="Gene3D" id="3.40.1410.10">
    <property type="entry name" value="Chorismate lyase-like"/>
    <property type="match status" value="1"/>
</dbReference>
<dbReference type="HAMAP" id="MF_01632">
    <property type="entry name" value="UbiC"/>
    <property type="match status" value="1"/>
</dbReference>
<dbReference type="InterPro" id="IPR007440">
    <property type="entry name" value="Chorismate--pyruvate_lyase"/>
</dbReference>
<dbReference type="InterPro" id="IPR028978">
    <property type="entry name" value="Chorismate_lyase_/UTRA_dom_sf"/>
</dbReference>
<dbReference type="PANTHER" id="PTHR38683">
    <property type="entry name" value="CHORISMATE PYRUVATE-LYASE"/>
    <property type="match status" value="1"/>
</dbReference>
<dbReference type="PANTHER" id="PTHR38683:SF1">
    <property type="entry name" value="CHORISMATE PYRUVATE-LYASE"/>
    <property type="match status" value="1"/>
</dbReference>
<dbReference type="Pfam" id="PF04345">
    <property type="entry name" value="Chor_lyase"/>
    <property type="match status" value="1"/>
</dbReference>
<dbReference type="SUPFAM" id="SSF64288">
    <property type="entry name" value="Chorismate lyase-like"/>
    <property type="match status" value="1"/>
</dbReference>
<comment type="function">
    <text evidence="1">Removes the pyruvyl group from chorismate, with concomitant aromatization of the ring, to provide 4-hydroxybenzoate (4HB) for the ubiquinone pathway.</text>
</comment>
<comment type="catalytic activity">
    <reaction evidence="1">
        <text>chorismate = 4-hydroxybenzoate + pyruvate</text>
        <dbReference type="Rhea" id="RHEA:16505"/>
        <dbReference type="ChEBI" id="CHEBI:15361"/>
        <dbReference type="ChEBI" id="CHEBI:17879"/>
        <dbReference type="ChEBI" id="CHEBI:29748"/>
        <dbReference type="EC" id="4.1.3.40"/>
    </reaction>
</comment>
<comment type="pathway">
    <text evidence="1">Cofactor biosynthesis; ubiquinone biosynthesis.</text>
</comment>
<comment type="subcellular location">
    <subcellularLocation>
        <location evidence="1">Cytoplasm</location>
    </subcellularLocation>
</comment>
<comment type="similarity">
    <text evidence="1">Belongs to the UbiC family.</text>
</comment>